<gene>
    <name evidence="1" type="primary">psbH</name>
</gene>
<accession>Q1XDG1</accession>
<feature type="chain" id="PRO_0000275780" description="Photosystem II reaction center protein H">
    <location>
        <begin position="1"/>
        <end position="67"/>
    </location>
</feature>
<feature type="transmembrane region" description="Helical" evidence="1">
    <location>
        <begin position="29"/>
        <end position="49"/>
    </location>
</feature>
<comment type="function">
    <text evidence="1">One of the components of the core complex of photosystem II (PSII), required for its stability and/or assembly. PSII is a light-driven water:plastoquinone oxidoreductase that uses light energy to abstract electrons from H(2)O, generating O(2) and a proton gradient subsequently used for ATP formation. It consists of a core antenna complex that captures photons, and an electron transfer chain that converts photonic excitation into a charge separation.</text>
</comment>
<comment type="subunit">
    <text evidence="1">PSII is composed of 1 copy each of membrane proteins PsbA, PsbB, PsbC, PsbD, PsbE, PsbF, PsbH, PsbI, PsbJ, PsbK, PsbL, PsbM, PsbT, PsbX, PsbY, PsbZ, Psb30/Ycf12, at least 3 peripheral proteins of the oxygen-evolving complex and a large number of cofactors. It forms dimeric complexes.</text>
</comment>
<comment type="subcellular location">
    <subcellularLocation>
        <location evidence="1">Plastid</location>
        <location evidence="1">Chloroplast thylakoid membrane</location>
        <topology evidence="1">Single-pass membrane protein</topology>
    </subcellularLocation>
</comment>
<comment type="similarity">
    <text evidence="1">Belongs to the PsbH family.</text>
</comment>
<reference key="1">
    <citation type="submission" date="2003-11" db="EMBL/GenBank/DDBJ databases">
        <title>Whole genome sequence of Porphyra yezoensis chloroplast.</title>
        <authorList>
            <person name="Kunimoto M."/>
            <person name="Morishima K."/>
            <person name="Yoshikawa M."/>
            <person name="Fukuda S."/>
            <person name="Kobayashi T."/>
            <person name="Kobayashi M."/>
            <person name="Okazaki T."/>
            <person name="Ohara I."/>
            <person name="Nakayama I."/>
        </authorList>
    </citation>
    <scope>NUCLEOTIDE SEQUENCE [LARGE SCALE GENOMIC DNA]</scope>
    <source>
        <strain>U-51</strain>
    </source>
</reference>
<keyword id="KW-0150">Chloroplast</keyword>
<keyword id="KW-0472">Membrane</keyword>
<keyword id="KW-0602">Photosynthesis</keyword>
<keyword id="KW-0604">Photosystem II</keyword>
<keyword id="KW-0934">Plastid</keyword>
<keyword id="KW-0793">Thylakoid</keyword>
<keyword id="KW-0812">Transmembrane</keyword>
<keyword id="KW-1133">Transmembrane helix</keyword>
<geneLocation type="chloroplast"/>
<protein>
    <recommendedName>
        <fullName evidence="1">Photosystem II reaction center protein H</fullName>
        <shortName evidence="1">PSII-H</shortName>
    </recommendedName>
</protein>
<name>PSBH_PYRYE</name>
<sequence>MALRTRLGEILRPLNSEYGKVAPGWGTTPIMGIFMLLFFLFLLIILQIYNSSLVLENVDVDWATLGS</sequence>
<proteinExistence type="inferred from homology"/>
<dbReference type="EMBL" id="AP006715">
    <property type="protein sequence ID" value="BAE92450.1"/>
    <property type="molecule type" value="Genomic_DNA"/>
</dbReference>
<dbReference type="RefSeq" id="YP_537007.1">
    <property type="nucleotide sequence ID" value="NC_007932.1"/>
</dbReference>
<dbReference type="SMR" id="Q1XDG1"/>
<dbReference type="GeneID" id="3978782"/>
<dbReference type="GO" id="GO:0009535">
    <property type="term" value="C:chloroplast thylakoid membrane"/>
    <property type="evidence" value="ECO:0007669"/>
    <property type="project" value="UniProtKB-SubCell"/>
</dbReference>
<dbReference type="GO" id="GO:0009523">
    <property type="term" value="C:photosystem II"/>
    <property type="evidence" value="ECO:0007669"/>
    <property type="project" value="UniProtKB-KW"/>
</dbReference>
<dbReference type="GO" id="GO:0042301">
    <property type="term" value="F:phosphate ion binding"/>
    <property type="evidence" value="ECO:0007669"/>
    <property type="project" value="InterPro"/>
</dbReference>
<dbReference type="GO" id="GO:0015979">
    <property type="term" value="P:photosynthesis"/>
    <property type="evidence" value="ECO:0007669"/>
    <property type="project" value="UniProtKB-UniRule"/>
</dbReference>
<dbReference type="GO" id="GO:0050821">
    <property type="term" value="P:protein stabilization"/>
    <property type="evidence" value="ECO:0007669"/>
    <property type="project" value="InterPro"/>
</dbReference>
<dbReference type="Gene3D" id="1.20.5.880">
    <property type="entry name" value="Photosystem II reaction center protein H"/>
    <property type="match status" value="1"/>
</dbReference>
<dbReference type="HAMAP" id="MF_00752">
    <property type="entry name" value="PSII_PsbH"/>
    <property type="match status" value="1"/>
</dbReference>
<dbReference type="InterPro" id="IPR001056">
    <property type="entry name" value="PSII_PsbH"/>
</dbReference>
<dbReference type="InterPro" id="IPR036863">
    <property type="entry name" value="PSII_PsbH_sf"/>
</dbReference>
<dbReference type="NCBIfam" id="NF002728">
    <property type="entry name" value="PRK02624.1"/>
    <property type="match status" value="1"/>
</dbReference>
<dbReference type="PANTHER" id="PTHR34469">
    <property type="entry name" value="PHOTOSYSTEM II REACTION CENTER PROTEIN H"/>
    <property type="match status" value="1"/>
</dbReference>
<dbReference type="PANTHER" id="PTHR34469:SF4">
    <property type="entry name" value="PHOTOSYSTEM II REACTION CENTER PROTEIN H"/>
    <property type="match status" value="1"/>
</dbReference>
<dbReference type="Pfam" id="PF00737">
    <property type="entry name" value="PsbH"/>
    <property type="match status" value="1"/>
</dbReference>
<dbReference type="SUPFAM" id="SSF161025">
    <property type="entry name" value="Photosystem II 10 kDa phosphoprotein PsbH"/>
    <property type="match status" value="1"/>
</dbReference>
<organism>
    <name type="scientific">Pyropia yezoensis</name>
    <name type="common">Susabi-nori</name>
    <name type="synonym">Porphyra yezoensis</name>
    <dbReference type="NCBI Taxonomy" id="2788"/>
    <lineage>
        <taxon>Eukaryota</taxon>
        <taxon>Rhodophyta</taxon>
        <taxon>Bangiophyceae</taxon>
        <taxon>Bangiales</taxon>
        <taxon>Bangiaceae</taxon>
        <taxon>Pyropia</taxon>
    </lineage>
</organism>
<evidence type="ECO:0000255" key="1">
    <source>
        <dbReference type="HAMAP-Rule" id="MF_00752"/>
    </source>
</evidence>